<reference key="1">
    <citation type="journal article" date="2003" name="Genome Res.">
        <title>Comparative genome analysis of Vibrio vulnificus, a marine pathogen.</title>
        <authorList>
            <person name="Chen C.-Y."/>
            <person name="Wu K.-M."/>
            <person name="Chang Y.-C."/>
            <person name="Chang C.-H."/>
            <person name="Tsai H.-C."/>
            <person name="Liao T.-L."/>
            <person name="Liu Y.-M."/>
            <person name="Chen H.-J."/>
            <person name="Shen A.B.-T."/>
            <person name="Li J.-C."/>
            <person name="Su T.-L."/>
            <person name="Shao C.-P."/>
            <person name="Lee C.-T."/>
            <person name="Hor L.-I."/>
            <person name="Tsai S.-F."/>
        </authorList>
    </citation>
    <scope>NUCLEOTIDE SEQUENCE [LARGE SCALE GENOMIC DNA]</scope>
    <source>
        <strain>YJ016</strain>
    </source>
</reference>
<feature type="chain" id="PRO_0000187503" description="Large ribosomal subunit protein bL34">
    <location>
        <begin position="1"/>
        <end position="46"/>
    </location>
</feature>
<protein>
    <recommendedName>
        <fullName evidence="1">Large ribosomal subunit protein bL34</fullName>
    </recommendedName>
    <alternativeName>
        <fullName evidence="2">50S ribosomal protein L34</fullName>
    </alternativeName>
</protein>
<sequence>MATKRTFQPSVLKRKRTHGFRARMATKNGRKVINARRAKGRARLSK</sequence>
<accession>Q7MQK3</accession>
<name>RL34_VIBVY</name>
<proteinExistence type="inferred from homology"/>
<dbReference type="EMBL" id="BA000037">
    <property type="protein sequence ID" value="BAC92769.1"/>
    <property type="molecule type" value="Genomic_DNA"/>
</dbReference>
<dbReference type="RefSeq" id="WP_011079039.1">
    <property type="nucleotide sequence ID" value="NC_005139.1"/>
</dbReference>
<dbReference type="SMR" id="Q7MQK3"/>
<dbReference type="STRING" id="672.VV93_v1c30080"/>
<dbReference type="GeneID" id="95678597"/>
<dbReference type="KEGG" id="vvy:VV0005"/>
<dbReference type="eggNOG" id="COG0230">
    <property type="taxonomic scope" value="Bacteria"/>
</dbReference>
<dbReference type="HOGENOM" id="CLU_129938_2_0_6"/>
<dbReference type="Proteomes" id="UP000002675">
    <property type="component" value="Chromosome I"/>
</dbReference>
<dbReference type="GO" id="GO:1990904">
    <property type="term" value="C:ribonucleoprotein complex"/>
    <property type="evidence" value="ECO:0007669"/>
    <property type="project" value="UniProtKB-KW"/>
</dbReference>
<dbReference type="GO" id="GO:0005840">
    <property type="term" value="C:ribosome"/>
    <property type="evidence" value="ECO:0007669"/>
    <property type="project" value="UniProtKB-KW"/>
</dbReference>
<dbReference type="GO" id="GO:0003735">
    <property type="term" value="F:structural constituent of ribosome"/>
    <property type="evidence" value="ECO:0007669"/>
    <property type="project" value="InterPro"/>
</dbReference>
<dbReference type="GO" id="GO:0006412">
    <property type="term" value="P:translation"/>
    <property type="evidence" value="ECO:0007669"/>
    <property type="project" value="UniProtKB-UniRule"/>
</dbReference>
<dbReference type="FunFam" id="1.10.287.3980:FF:000001">
    <property type="entry name" value="Mitochondrial ribosomal protein L34"/>
    <property type="match status" value="1"/>
</dbReference>
<dbReference type="Gene3D" id="1.10.287.3980">
    <property type="match status" value="1"/>
</dbReference>
<dbReference type="HAMAP" id="MF_00391">
    <property type="entry name" value="Ribosomal_bL34"/>
    <property type="match status" value="1"/>
</dbReference>
<dbReference type="InterPro" id="IPR000271">
    <property type="entry name" value="Ribosomal_bL34"/>
</dbReference>
<dbReference type="InterPro" id="IPR020939">
    <property type="entry name" value="Ribosomal_bL34_CS"/>
</dbReference>
<dbReference type="NCBIfam" id="TIGR01030">
    <property type="entry name" value="rpmH_bact"/>
    <property type="match status" value="1"/>
</dbReference>
<dbReference type="PANTHER" id="PTHR14503:SF4">
    <property type="entry name" value="LARGE RIBOSOMAL SUBUNIT PROTEIN BL34M"/>
    <property type="match status" value="1"/>
</dbReference>
<dbReference type="PANTHER" id="PTHR14503">
    <property type="entry name" value="MITOCHONDRIAL RIBOSOMAL PROTEIN 34 FAMILY MEMBER"/>
    <property type="match status" value="1"/>
</dbReference>
<dbReference type="Pfam" id="PF00468">
    <property type="entry name" value="Ribosomal_L34"/>
    <property type="match status" value="1"/>
</dbReference>
<dbReference type="PROSITE" id="PS00784">
    <property type="entry name" value="RIBOSOMAL_L34"/>
    <property type="match status" value="1"/>
</dbReference>
<organism>
    <name type="scientific">Vibrio vulnificus (strain YJ016)</name>
    <dbReference type="NCBI Taxonomy" id="196600"/>
    <lineage>
        <taxon>Bacteria</taxon>
        <taxon>Pseudomonadati</taxon>
        <taxon>Pseudomonadota</taxon>
        <taxon>Gammaproteobacteria</taxon>
        <taxon>Vibrionales</taxon>
        <taxon>Vibrionaceae</taxon>
        <taxon>Vibrio</taxon>
    </lineage>
</organism>
<gene>
    <name evidence="1" type="primary">rpmH</name>
    <name type="ordered locus">VV0005</name>
</gene>
<evidence type="ECO:0000255" key="1">
    <source>
        <dbReference type="HAMAP-Rule" id="MF_00391"/>
    </source>
</evidence>
<evidence type="ECO:0000305" key="2"/>
<keyword id="KW-0687">Ribonucleoprotein</keyword>
<keyword id="KW-0689">Ribosomal protein</keyword>
<comment type="similarity">
    <text evidence="1">Belongs to the bacterial ribosomal protein bL34 family.</text>
</comment>